<keyword id="KW-1003">Cell membrane</keyword>
<keyword id="KW-0407">Ion channel</keyword>
<keyword id="KW-0406">Ion transport</keyword>
<keyword id="KW-0472">Membrane</keyword>
<keyword id="KW-0812">Transmembrane</keyword>
<keyword id="KW-1133">Transmembrane helix</keyword>
<keyword id="KW-0813">Transport</keyword>
<proteinExistence type="evidence at protein level"/>
<feature type="chain" id="PRO_0000192464" description="Large-conductance mechanosensitive channel">
    <location>
        <begin position="1"/>
        <end position="120"/>
    </location>
</feature>
<feature type="transmembrane region" description="Helical" evidence="1">
    <location>
        <begin position="7"/>
        <end position="27"/>
    </location>
</feature>
<feature type="transmembrane region" description="Helical" evidence="1">
    <location>
        <begin position="64"/>
        <end position="84"/>
    </location>
</feature>
<protein>
    <recommendedName>
        <fullName evidence="1">Large-conductance mechanosensitive channel</fullName>
    </recommendedName>
</protein>
<gene>
    <name evidence="1" type="primary">mscL</name>
    <name type="ordered locus">SAS1287</name>
</gene>
<sequence length="120" mass="13616">MLKEFKEFALKGNVLDLAIAVVMGAAFNKIISSLVENIIMPLIGKIFGSVDFAKEWSFWGIKYGLFIQSVIDFIIIAFALFIFVKIANTLMKKEEAEEEAVVEENVVLLTEIRDLLREKK</sequence>
<comment type="function">
    <text evidence="1">Channel that opens in response to stretch forces in the membrane lipid bilayer. May participate in the regulation of osmotic pressure changes within the cell.</text>
</comment>
<comment type="subunit">
    <text evidence="1 2">Homopentamer.</text>
</comment>
<comment type="interaction">
    <interactant intactId="EBI-15898345">
        <id>Q6G9L1</id>
    </interactant>
    <interactant intactId="EBI-15898345">
        <id>Q6G9L1</id>
        <label>mscL</label>
    </interactant>
    <organismsDiffer>false</organismsDiffer>
    <experiments>6</experiments>
</comment>
<comment type="subcellular location">
    <subcellularLocation>
        <location evidence="1 2">Cell membrane</location>
        <topology evidence="1">Multi-pass membrane protein</topology>
    </subcellularLocation>
</comment>
<comment type="similarity">
    <text evidence="1">Belongs to the MscL family.</text>
</comment>
<dbReference type="EMBL" id="BX571857">
    <property type="protein sequence ID" value="CAG43065.1"/>
    <property type="molecule type" value="Genomic_DNA"/>
</dbReference>
<dbReference type="RefSeq" id="WP_000910489.1">
    <property type="nucleotide sequence ID" value="NC_002953.3"/>
</dbReference>
<dbReference type="SMR" id="Q6G9L1"/>
<dbReference type="DIP" id="DIP-58957N"/>
<dbReference type="KEGG" id="sas:SAS1287"/>
<dbReference type="HOGENOM" id="CLU_095787_0_0_9"/>
<dbReference type="GO" id="GO:0005886">
    <property type="term" value="C:plasma membrane"/>
    <property type="evidence" value="ECO:0007669"/>
    <property type="project" value="UniProtKB-SubCell"/>
</dbReference>
<dbReference type="GO" id="GO:0042802">
    <property type="term" value="F:identical protein binding"/>
    <property type="evidence" value="ECO:0000353"/>
    <property type="project" value="IntAct"/>
</dbReference>
<dbReference type="GO" id="GO:0008381">
    <property type="term" value="F:mechanosensitive monoatomic ion channel activity"/>
    <property type="evidence" value="ECO:0007669"/>
    <property type="project" value="UniProtKB-UniRule"/>
</dbReference>
<dbReference type="FunFam" id="1.10.1200.120:FF:000002">
    <property type="entry name" value="Large-conductance mechanosensitive channel"/>
    <property type="match status" value="1"/>
</dbReference>
<dbReference type="Gene3D" id="1.10.1200.120">
    <property type="entry name" value="Large-conductance mechanosensitive channel, MscL, domain 1"/>
    <property type="match status" value="1"/>
</dbReference>
<dbReference type="HAMAP" id="MF_00115">
    <property type="entry name" value="MscL"/>
    <property type="match status" value="1"/>
</dbReference>
<dbReference type="InterPro" id="IPR019823">
    <property type="entry name" value="Mechanosensitive_channel_CS"/>
</dbReference>
<dbReference type="InterPro" id="IPR001185">
    <property type="entry name" value="MS_channel"/>
</dbReference>
<dbReference type="InterPro" id="IPR037673">
    <property type="entry name" value="MSC/AndL"/>
</dbReference>
<dbReference type="InterPro" id="IPR036019">
    <property type="entry name" value="MscL_channel"/>
</dbReference>
<dbReference type="NCBIfam" id="TIGR00220">
    <property type="entry name" value="mscL"/>
    <property type="match status" value="1"/>
</dbReference>
<dbReference type="NCBIfam" id="NF010559">
    <property type="entry name" value="PRK13954.1"/>
    <property type="match status" value="1"/>
</dbReference>
<dbReference type="PANTHER" id="PTHR30266:SF2">
    <property type="entry name" value="LARGE-CONDUCTANCE MECHANOSENSITIVE CHANNEL"/>
    <property type="match status" value="1"/>
</dbReference>
<dbReference type="PANTHER" id="PTHR30266">
    <property type="entry name" value="MECHANOSENSITIVE CHANNEL MSCL"/>
    <property type="match status" value="1"/>
</dbReference>
<dbReference type="Pfam" id="PF01741">
    <property type="entry name" value="MscL"/>
    <property type="match status" value="1"/>
</dbReference>
<dbReference type="PRINTS" id="PR01264">
    <property type="entry name" value="MECHCHANNEL"/>
</dbReference>
<dbReference type="SUPFAM" id="SSF81330">
    <property type="entry name" value="Gated mechanosensitive channel"/>
    <property type="match status" value="1"/>
</dbReference>
<dbReference type="PROSITE" id="PS01327">
    <property type="entry name" value="MSCL"/>
    <property type="match status" value="1"/>
</dbReference>
<accession>Q6G9L1</accession>
<reference key="1">
    <citation type="journal article" date="2004" name="Proc. Natl. Acad. Sci. U.S.A.">
        <title>Complete genomes of two clinical Staphylococcus aureus strains: evidence for the rapid evolution of virulence and drug resistance.</title>
        <authorList>
            <person name="Holden M.T.G."/>
            <person name="Feil E.J."/>
            <person name="Lindsay J.A."/>
            <person name="Peacock S.J."/>
            <person name="Day N.P.J."/>
            <person name="Enright M.C."/>
            <person name="Foster T.J."/>
            <person name="Moore C.E."/>
            <person name="Hurst L."/>
            <person name="Atkin R."/>
            <person name="Barron A."/>
            <person name="Bason N."/>
            <person name="Bentley S.D."/>
            <person name="Chillingworth C."/>
            <person name="Chillingworth T."/>
            <person name="Churcher C."/>
            <person name="Clark L."/>
            <person name="Corton C."/>
            <person name="Cronin A."/>
            <person name="Doggett J."/>
            <person name="Dowd L."/>
            <person name="Feltwell T."/>
            <person name="Hance Z."/>
            <person name="Harris B."/>
            <person name="Hauser H."/>
            <person name="Holroyd S."/>
            <person name="Jagels K."/>
            <person name="James K.D."/>
            <person name="Lennard N."/>
            <person name="Line A."/>
            <person name="Mayes R."/>
            <person name="Moule S."/>
            <person name="Mungall K."/>
            <person name="Ormond D."/>
            <person name="Quail M.A."/>
            <person name="Rabbinowitsch E."/>
            <person name="Rutherford K.M."/>
            <person name="Sanders M."/>
            <person name="Sharp S."/>
            <person name="Simmonds M."/>
            <person name="Stevens K."/>
            <person name="Whitehead S."/>
            <person name="Barrell B.G."/>
            <person name="Spratt B.G."/>
            <person name="Parkhill J."/>
        </authorList>
    </citation>
    <scope>NUCLEOTIDE SEQUENCE [LARGE SCALE GENOMIC DNA]</scope>
    <source>
        <strain>MSSA476</strain>
    </source>
</reference>
<reference key="2">
    <citation type="journal article" date="2010" name="PLoS Biol.">
        <title>S. aureus MscL is a pentamer in vivo but of variable stoichiometries in vitro: implications for detergent-solubilized membrane proteins.</title>
        <authorList>
            <person name="Dorwart M.R."/>
            <person name="Wray R."/>
            <person name="Brautigam C.A."/>
            <person name="Jiang Y."/>
            <person name="Blount P."/>
        </authorList>
    </citation>
    <scope>SUBUNIT</scope>
    <scope>SUBCELLULAR LOCATION</scope>
</reference>
<evidence type="ECO:0000255" key="1">
    <source>
        <dbReference type="HAMAP-Rule" id="MF_00115"/>
    </source>
</evidence>
<evidence type="ECO:0000269" key="2">
    <source>
    </source>
</evidence>
<name>MSCL_STAAS</name>
<organism>
    <name type="scientific">Staphylococcus aureus (strain MSSA476)</name>
    <dbReference type="NCBI Taxonomy" id="282459"/>
    <lineage>
        <taxon>Bacteria</taxon>
        <taxon>Bacillati</taxon>
        <taxon>Bacillota</taxon>
        <taxon>Bacilli</taxon>
        <taxon>Bacillales</taxon>
        <taxon>Staphylococcaceae</taxon>
        <taxon>Staphylococcus</taxon>
    </lineage>
</organism>